<organism>
    <name type="scientific">Burkholderia ambifaria (strain MC40-6)</name>
    <dbReference type="NCBI Taxonomy" id="398577"/>
    <lineage>
        <taxon>Bacteria</taxon>
        <taxon>Pseudomonadati</taxon>
        <taxon>Pseudomonadota</taxon>
        <taxon>Betaproteobacteria</taxon>
        <taxon>Burkholderiales</taxon>
        <taxon>Burkholderiaceae</taxon>
        <taxon>Burkholderia</taxon>
        <taxon>Burkholderia cepacia complex</taxon>
    </lineage>
</organism>
<dbReference type="EMBL" id="CP001025">
    <property type="protein sequence ID" value="ACB62801.1"/>
    <property type="molecule type" value="Genomic_DNA"/>
</dbReference>
<dbReference type="RefSeq" id="WP_004197937.1">
    <property type="nucleotide sequence ID" value="NC_010551.1"/>
</dbReference>
<dbReference type="SMR" id="B1YRQ3"/>
<dbReference type="GeneID" id="98107136"/>
<dbReference type="KEGG" id="bac:BamMC406_0300"/>
<dbReference type="HOGENOM" id="CLU_072439_5_0_4"/>
<dbReference type="OrthoDB" id="9806415at2"/>
<dbReference type="Proteomes" id="UP000001680">
    <property type="component" value="Chromosome 1"/>
</dbReference>
<dbReference type="GO" id="GO:1990904">
    <property type="term" value="C:ribonucleoprotein complex"/>
    <property type="evidence" value="ECO:0007669"/>
    <property type="project" value="UniProtKB-KW"/>
</dbReference>
<dbReference type="GO" id="GO:0005840">
    <property type="term" value="C:ribosome"/>
    <property type="evidence" value="ECO:0007669"/>
    <property type="project" value="UniProtKB-KW"/>
</dbReference>
<dbReference type="GO" id="GO:0019843">
    <property type="term" value="F:rRNA binding"/>
    <property type="evidence" value="ECO:0007669"/>
    <property type="project" value="UniProtKB-UniRule"/>
</dbReference>
<dbReference type="GO" id="GO:0003735">
    <property type="term" value="F:structural constituent of ribosome"/>
    <property type="evidence" value="ECO:0007669"/>
    <property type="project" value="InterPro"/>
</dbReference>
<dbReference type="GO" id="GO:0006412">
    <property type="term" value="P:translation"/>
    <property type="evidence" value="ECO:0007669"/>
    <property type="project" value="UniProtKB-UniRule"/>
</dbReference>
<dbReference type="FunFam" id="3.30.420.80:FF:000001">
    <property type="entry name" value="30S ribosomal protein S11"/>
    <property type="match status" value="1"/>
</dbReference>
<dbReference type="Gene3D" id="3.30.420.80">
    <property type="entry name" value="Ribosomal protein S11"/>
    <property type="match status" value="1"/>
</dbReference>
<dbReference type="HAMAP" id="MF_01310">
    <property type="entry name" value="Ribosomal_uS11"/>
    <property type="match status" value="1"/>
</dbReference>
<dbReference type="InterPro" id="IPR001971">
    <property type="entry name" value="Ribosomal_uS11"/>
</dbReference>
<dbReference type="InterPro" id="IPR019981">
    <property type="entry name" value="Ribosomal_uS11_bac-type"/>
</dbReference>
<dbReference type="InterPro" id="IPR018102">
    <property type="entry name" value="Ribosomal_uS11_CS"/>
</dbReference>
<dbReference type="InterPro" id="IPR036967">
    <property type="entry name" value="Ribosomal_uS11_sf"/>
</dbReference>
<dbReference type="NCBIfam" id="NF003698">
    <property type="entry name" value="PRK05309.1"/>
    <property type="match status" value="1"/>
</dbReference>
<dbReference type="NCBIfam" id="TIGR03632">
    <property type="entry name" value="uS11_bact"/>
    <property type="match status" value="1"/>
</dbReference>
<dbReference type="PANTHER" id="PTHR11759">
    <property type="entry name" value="40S RIBOSOMAL PROTEIN S14/30S RIBOSOMAL PROTEIN S11"/>
    <property type="match status" value="1"/>
</dbReference>
<dbReference type="Pfam" id="PF00411">
    <property type="entry name" value="Ribosomal_S11"/>
    <property type="match status" value="1"/>
</dbReference>
<dbReference type="PIRSF" id="PIRSF002131">
    <property type="entry name" value="Ribosomal_S11"/>
    <property type="match status" value="1"/>
</dbReference>
<dbReference type="SUPFAM" id="SSF53137">
    <property type="entry name" value="Translational machinery components"/>
    <property type="match status" value="1"/>
</dbReference>
<dbReference type="PROSITE" id="PS00054">
    <property type="entry name" value="RIBOSOMAL_S11"/>
    <property type="match status" value="1"/>
</dbReference>
<evidence type="ECO:0000255" key="1">
    <source>
        <dbReference type="HAMAP-Rule" id="MF_01310"/>
    </source>
</evidence>
<evidence type="ECO:0000305" key="2"/>
<gene>
    <name evidence="1" type="primary">rpsK</name>
    <name type="ordered locus">BamMC406_0300</name>
</gene>
<keyword id="KW-0687">Ribonucleoprotein</keyword>
<keyword id="KW-0689">Ribosomal protein</keyword>
<keyword id="KW-0694">RNA-binding</keyword>
<keyword id="KW-0699">rRNA-binding</keyword>
<protein>
    <recommendedName>
        <fullName evidence="1">Small ribosomal subunit protein uS11</fullName>
    </recommendedName>
    <alternativeName>
        <fullName evidence="2">30S ribosomal protein S11</fullName>
    </alternativeName>
</protein>
<name>RS11_BURA4</name>
<sequence>MAKASNTAAQRVRKKVKKNVAEGVVHVHASFNNTIITITDRQGNALAWATSGGQGFKGSRKSTPFAAQVAAESAGRVAMEYGVKNLEVRIKGPGPGRESAVRALHGLGIKITAISDVTPIPHNGCRPPKRRRI</sequence>
<accession>B1YRQ3</accession>
<proteinExistence type="inferred from homology"/>
<comment type="function">
    <text evidence="1">Located on the platform of the 30S subunit, it bridges several disparate RNA helices of the 16S rRNA. Forms part of the Shine-Dalgarno cleft in the 70S ribosome.</text>
</comment>
<comment type="subunit">
    <text evidence="1">Part of the 30S ribosomal subunit. Interacts with proteins S7 and S18. Binds to IF-3.</text>
</comment>
<comment type="similarity">
    <text evidence="1">Belongs to the universal ribosomal protein uS11 family.</text>
</comment>
<feature type="chain" id="PRO_1000141061" description="Small ribosomal subunit protein uS11">
    <location>
        <begin position="1"/>
        <end position="133"/>
    </location>
</feature>
<reference key="1">
    <citation type="submission" date="2008-04" db="EMBL/GenBank/DDBJ databases">
        <title>Complete sequence of chromosome 1 of Burkholderia ambifaria MC40-6.</title>
        <authorList>
            <person name="Copeland A."/>
            <person name="Lucas S."/>
            <person name="Lapidus A."/>
            <person name="Glavina del Rio T."/>
            <person name="Dalin E."/>
            <person name="Tice H."/>
            <person name="Pitluck S."/>
            <person name="Chain P."/>
            <person name="Malfatti S."/>
            <person name="Shin M."/>
            <person name="Vergez L."/>
            <person name="Lang D."/>
            <person name="Schmutz J."/>
            <person name="Larimer F."/>
            <person name="Land M."/>
            <person name="Hauser L."/>
            <person name="Kyrpides N."/>
            <person name="Lykidis A."/>
            <person name="Ramette A."/>
            <person name="Konstantinidis K."/>
            <person name="Tiedje J."/>
            <person name="Richardson P."/>
        </authorList>
    </citation>
    <scope>NUCLEOTIDE SEQUENCE [LARGE SCALE GENOMIC DNA]</scope>
    <source>
        <strain>MC40-6</strain>
    </source>
</reference>